<feature type="chain" id="PRO_0000101656" description="Probable ribosomal RNA small subunit methyltransferase A">
    <location>
        <begin position="1"/>
        <end position="275"/>
    </location>
</feature>
<feature type="binding site">
    <location>
        <position position="13"/>
    </location>
    <ligand>
        <name>S-adenosyl-L-methionine</name>
        <dbReference type="ChEBI" id="CHEBI:59789"/>
    </ligand>
</feature>
<feature type="binding site" evidence="1">
    <location>
        <position position="38"/>
    </location>
    <ligand>
        <name>S-adenosyl-L-methionine</name>
        <dbReference type="ChEBI" id="CHEBI:59789"/>
    </ligand>
</feature>
<feature type="binding site">
    <location>
        <position position="59"/>
    </location>
    <ligand>
        <name>S-adenosyl-L-methionine</name>
        <dbReference type="ChEBI" id="CHEBI:59789"/>
    </ligand>
</feature>
<feature type="binding site">
    <location>
        <position position="84"/>
    </location>
    <ligand>
        <name>S-adenosyl-L-methionine</name>
        <dbReference type="ChEBI" id="CHEBI:59789"/>
    </ligand>
</feature>
<feature type="binding site">
    <location>
        <position position="101"/>
    </location>
    <ligand>
        <name>S-adenosyl-L-methionine</name>
        <dbReference type="ChEBI" id="CHEBI:59789"/>
    </ligand>
</feature>
<feature type="helix" evidence="4">
    <location>
        <begin position="16"/>
        <end position="25"/>
    </location>
</feature>
<feature type="strand" evidence="4">
    <location>
        <begin position="33"/>
        <end position="37"/>
    </location>
</feature>
<feature type="helix" evidence="4">
    <location>
        <begin position="43"/>
        <end position="51"/>
    </location>
</feature>
<feature type="strand" evidence="4">
    <location>
        <begin position="52"/>
        <end position="60"/>
    </location>
</feature>
<feature type="helix" evidence="4">
    <location>
        <begin position="62"/>
        <end position="64"/>
    </location>
</feature>
<feature type="helix" evidence="4">
    <location>
        <begin position="65"/>
        <end position="74"/>
    </location>
</feature>
<feature type="strand" evidence="4">
    <location>
        <begin position="76"/>
        <end position="83"/>
    </location>
</feature>
<feature type="turn" evidence="4">
    <location>
        <begin position="85"/>
        <end position="87"/>
    </location>
</feature>
<feature type="helix" evidence="4">
    <location>
        <begin position="90"/>
        <end position="92"/>
    </location>
</feature>
<feature type="strand" evidence="4">
    <location>
        <begin position="96"/>
        <end position="101"/>
    </location>
</feature>
<feature type="helix" evidence="4">
    <location>
        <begin position="104"/>
        <end position="106"/>
    </location>
</feature>
<feature type="helix" evidence="4">
    <location>
        <begin position="107"/>
        <end position="117"/>
    </location>
</feature>
<feature type="strand" evidence="4">
    <location>
        <begin position="120"/>
        <end position="127"/>
    </location>
</feature>
<feature type="helix" evidence="4">
    <location>
        <begin position="128"/>
        <end position="135"/>
    </location>
</feature>
<feature type="helix" evidence="4">
    <location>
        <begin position="145"/>
        <end position="151"/>
    </location>
</feature>
<feature type="strand" evidence="4">
    <location>
        <begin position="154"/>
        <end position="162"/>
    </location>
</feature>
<feature type="helix" evidence="4">
    <location>
        <begin position="164"/>
        <end position="166"/>
    </location>
</feature>
<feature type="strand" evidence="4">
    <location>
        <begin position="167"/>
        <end position="169"/>
    </location>
</feature>
<feature type="strand" evidence="4">
    <location>
        <begin position="175"/>
        <end position="182"/>
    </location>
</feature>
<feature type="turn" evidence="4">
    <location>
        <begin position="185"/>
        <end position="187"/>
    </location>
</feature>
<feature type="helix" evidence="4">
    <location>
        <begin position="192"/>
        <end position="203"/>
    </location>
</feature>
<feature type="turn" evidence="4">
    <location>
        <begin position="204"/>
        <end position="207"/>
    </location>
</feature>
<feature type="helix" evidence="4">
    <location>
        <begin position="210"/>
        <end position="216"/>
    </location>
</feature>
<feature type="helix" evidence="4">
    <location>
        <begin position="218"/>
        <end position="221"/>
    </location>
</feature>
<feature type="helix" evidence="4">
    <location>
        <begin position="225"/>
        <end position="236"/>
    </location>
</feature>
<feature type="helix" evidence="4">
    <location>
        <begin position="240"/>
        <end position="246"/>
    </location>
</feature>
<feature type="helix" evidence="4">
    <location>
        <begin position="250"/>
        <end position="252"/>
    </location>
</feature>
<feature type="helix" evidence="4">
    <location>
        <begin position="255"/>
        <end position="271"/>
    </location>
</feature>
<reference key="1">
    <citation type="journal article" date="1996" name="Science">
        <title>Complete genome sequence of the methanogenic archaeon, Methanococcus jannaschii.</title>
        <authorList>
            <person name="Bult C.J."/>
            <person name="White O."/>
            <person name="Olsen G.J."/>
            <person name="Zhou L."/>
            <person name="Fleischmann R.D."/>
            <person name="Sutton G.G."/>
            <person name="Blake J.A."/>
            <person name="FitzGerald L.M."/>
            <person name="Clayton R.A."/>
            <person name="Gocayne J.D."/>
            <person name="Kerlavage A.R."/>
            <person name="Dougherty B.A."/>
            <person name="Tomb J.-F."/>
            <person name="Adams M.D."/>
            <person name="Reich C.I."/>
            <person name="Overbeek R."/>
            <person name="Kirkness E.F."/>
            <person name="Weinstock K.G."/>
            <person name="Merrick J.M."/>
            <person name="Glodek A."/>
            <person name="Scott J.L."/>
            <person name="Geoghagen N.S.M."/>
            <person name="Weidman J.F."/>
            <person name="Fuhrmann J.L."/>
            <person name="Nguyen D."/>
            <person name="Utterback T.R."/>
            <person name="Kelley J.M."/>
            <person name="Peterson J.D."/>
            <person name="Sadow P.W."/>
            <person name="Hanna M.C."/>
            <person name="Cotton M.D."/>
            <person name="Roberts K.M."/>
            <person name="Hurst M.A."/>
            <person name="Kaine B.P."/>
            <person name="Borodovsky M."/>
            <person name="Klenk H.-P."/>
            <person name="Fraser C.M."/>
            <person name="Smith H.O."/>
            <person name="Woese C.R."/>
            <person name="Venter J.C."/>
        </authorList>
    </citation>
    <scope>NUCLEOTIDE SEQUENCE [LARGE SCALE GENOMIC DNA]</scope>
    <source>
        <strain>ATCC 43067 / DSM 2661 / JAL-1 / JCM 10045 / NBRC 100440</strain>
    </source>
</reference>
<reference key="2">
    <citation type="journal article" date="2009" name="J. Mol. Biol.">
        <title>Structural and functional divergence within the Dim1/KsgA family of rRNA methyltransferases.</title>
        <authorList>
            <person name="Pulicherla N."/>
            <person name="Pogorzala L.A."/>
            <person name="Xu Z."/>
            <person name="O'Farrell H.C."/>
            <person name="Musayev F.N."/>
            <person name="Scarsdale J.N."/>
            <person name="Sia E.A."/>
            <person name="Culver G.M."/>
            <person name="Rife J.P."/>
        </authorList>
    </citation>
    <scope>X-RAY CRYSTALLOGRAPHY (1.75 ANGSTROMS)</scope>
    <scope>FUNCTION</scope>
</reference>
<reference key="3">
    <citation type="journal article" date="2010" name="Biochemistry">
        <title>Binding of adenosine-based ligands to the MjDim1 rRNA methyltransferase: implications for reaction mechanism and drug design.</title>
        <authorList>
            <person name="O'Farrell H.C."/>
            <person name="Musayev F.N."/>
            <person name="Scarsdale J.N."/>
            <person name="Rife J.P."/>
        </authorList>
    </citation>
    <scope>X-RAY CRYSTALLOGRAPHY (1.60 ANGSTROMS) IN COMPLEXES WITH AMP; S-ADENOSYL-L-HOMOCYSTEINE; S-ADENOSYL-L-METHIONINE AND ADENOSINE</scope>
    <scope>FUNCTION</scope>
</reference>
<evidence type="ECO:0000255" key="1">
    <source>
        <dbReference type="HAMAP-Rule" id="MF_00607"/>
    </source>
</evidence>
<evidence type="ECO:0000269" key="2">
    <source>
    </source>
</evidence>
<evidence type="ECO:0000269" key="3">
    <source>
    </source>
</evidence>
<evidence type="ECO:0007829" key="4">
    <source>
        <dbReference type="PDB" id="3GRU"/>
    </source>
</evidence>
<organism>
    <name type="scientific">Methanocaldococcus jannaschii (strain ATCC 43067 / DSM 2661 / JAL-1 / JCM 10045 / NBRC 100440)</name>
    <name type="common">Methanococcus jannaschii</name>
    <dbReference type="NCBI Taxonomy" id="243232"/>
    <lineage>
        <taxon>Archaea</taxon>
        <taxon>Methanobacteriati</taxon>
        <taxon>Methanobacteriota</taxon>
        <taxon>Methanomada group</taxon>
        <taxon>Methanococci</taxon>
        <taxon>Methanococcales</taxon>
        <taxon>Methanocaldococcaceae</taxon>
        <taxon>Methanocaldococcus</taxon>
    </lineage>
</organism>
<comment type="function">
    <text evidence="1 2 3">Specifically dimethylates two adjacent adenosines in the loop of a conserved hairpin near the 3'-end of 16S rRNA in the 30S particle. May play a critical role in biogenesis of 30S subunits.</text>
</comment>
<comment type="subcellular location">
    <subcellularLocation>
        <location evidence="1">Cytoplasm</location>
    </subcellularLocation>
</comment>
<comment type="similarity">
    <text evidence="1">Belongs to the class I-like SAM-binding methyltransferase superfamily. rRNA adenine N(6)-methyltransferase family. RsmA subfamily.</text>
</comment>
<accession>Q58435</accession>
<protein>
    <recommendedName>
        <fullName evidence="1">Probable ribosomal RNA small subunit methyltransferase A</fullName>
        <ecNumber evidence="1">2.1.1.-</ecNumber>
    </recommendedName>
    <alternativeName>
        <fullName evidence="1">16S rRNA dimethyladenosine transferase</fullName>
    </alternativeName>
    <alternativeName>
        <fullName evidence="1">16S rRNA dimethylase</fullName>
    </alternativeName>
    <alternativeName>
        <fullName evidence="1">S-adenosylmethionine-6-N',N'-adenosyl(rRNA) dimethyltransferase</fullName>
    </alternativeName>
</protein>
<gene>
    <name evidence="1" type="primary">rsmA</name>
    <name evidence="1" type="synonym">ksgA</name>
    <name type="ordered locus">MJ1029</name>
</gene>
<dbReference type="EC" id="2.1.1.-" evidence="1"/>
<dbReference type="EMBL" id="L77117">
    <property type="protein sequence ID" value="AAB99033.1"/>
    <property type="molecule type" value="Genomic_DNA"/>
</dbReference>
<dbReference type="PIR" id="D64428">
    <property type="entry name" value="D64428"/>
</dbReference>
<dbReference type="RefSeq" id="WP_010870542.1">
    <property type="nucleotide sequence ID" value="NC_000909.1"/>
</dbReference>
<dbReference type="PDB" id="3FYC">
    <property type="method" value="X-ray"/>
    <property type="resolution" value="2.15 A"/>
    <property type="chains" value="A/B=10-272"/>
</dbReference>
<dbReference type="PDB" id="3FYD">
    <property type="method" value="X-ray"/>
    <property type="resolution" value="1.75 A"/>
    <property type="chains" value="A=10-272"/>
</dbReference>
<dbReference type="PDB" id="3GRR">
    <property type="method" value="X-ray"/>
    <property type="resolution" value="1.80 A"/>
    <property type="chains" value="A=1-275"/>
</dbReference>
<dbReference type="PDB" id="3GRU">
    <property type="method" value="X-ray"/>
    <property type="resolution" value="1.60 A"/>
    <property type="chains" value="A=1-275"/>
</dbReference>
<dbReference type="PDB" id="3GRV">
    <property type="method" value="X-ray"/>
    <property type="resolution" value="1.90 A"/>
    <property type="chains" value="A=1-275"/>
</dbReference>
<dbReference type="PDB" id="3GRY">
    <property type="method" value="X-ray"/>
    <property type="resolution" value="2.20 A"/>
    <property type="chains" value="A=1-275"/>
</dbReference>
<dbReference type="PDBsum" id="3FYC"/>
<dbReference type="PDBsum" id="3FYD"/>
<dbReference type="PDBsum" id="3GRR"/>
<dbReference type="PDBsum" id="3GRU"/>
<dbReference type="PDBsum" id="3GRV"/>
<dbReference type="PDBsum" id="3GRY"/>
<dbReference type="SMR" id="Q58435"/>
<dbReference type="FunCoup" id="Q58435">
    <property type="interactions" value="95"/>
</dbReference>
<dbReference type="STRING" id="243232.MJ_1029"/>
<dbReference type="PaxDb" id="243232-MJ_1029"/>
<dbReference type="EnsemblBacteria" id="AAB99033">
    <property type="protein sequence ID" value="AAB99033"/>
    <property type="gene ID" value="MJ_1029"/>
</dbReference>
<dbReference type="GeneID" id="1451926"/>
<dbReference type="KEGG" id="mja:MJ_1029"/>
<dbReference type="eggNOG" id="arCOG04131">
    <property type="taxonomic scope" value="Archaea"/>
</dbReference>
<dbReference type="HOGENOM" id="CLU_041220_0_2_2"/>
<dbReference type="InParanoid" id="Q58435"/>
<dbReference type="OrthoDB" id="9883at2157"/>
<dbReference type="PhylomeDB" id="Q58435"/>
<dbReference type="EvolutionaryTrace" id="Q58435"/>
<dbReference type="Proteomes" id="UP000000805">
    <property type="component" value="Chromosome"/>
</dbReference>
<dbReference type="GO" id="GO:0005737">
    <property type="term" value="C:cytoplasm"/>
    <property type="evidence" value="ECO:0007669"/>
    <property type="project" value="UniProtKB-SubCell"/>
</dbReference>
<dbReference type="GO" id="GO:0003723">
    <property type="term" value="F:RNA binding"/>
    <property type="evidence" value="ECO:0007669"/>
    <property type="project" value="UniProtKB-KW"/>
</dbReference>
<dbReference type="GO" id="GO:0000179">
    <property type="term" value="F:rRNA (adenine-N6,N6-)-dimethyltransferase activity"/>
    <property type="evidence" value="ECO:0000318"/>
    <property type="project" value="GO_Central"/>
</dbReference>
<dbReference type="GO" id="GO:0031167">
    <property type="term" value="P:rRNA methylation"/>
    <property type="evidence" value="ECO:0000318"/>
    <property type="project" value="GO_Central"/>
</dbReference>
<dbReference type="CDD" id="cd02440">
    <property type="entry name" value="AdoMet_MTases"/>
    <property type="match status" value="1"/>
</dbReference>
<dbReference type="FunFam" id="1.10.8.100:FF:000017">
    <property type="entry name" value="Probable ribosomal RNA small subunit methyltransferase A"/>
    <property type="match status" value="1"/>
</dbReference>
<dbReference type="FunFam" id="3.40.50.150:FF:000023">
    <property type="entry name" value="Ribosomal RNA small subunit methyltransferase A"/>
    <property type="match status" value="1"/>
</dbReference>
<dbReference type="Gene3D" id="1.10.8.100">
    <property type="entry name" value="Ribosomal RNA adenine dimethylase-like, domain 2"/>
    <property type="match status" value="1"/>
</dbReference>
<dbReference type="Gene3D" id="3.40.50.150">
    <property type="entry name" value="Vaccinia Virus protein VP39"/>
    <property type="match status" value="1"/>
</dbReference>
<dbReference type="HAMAP" id="MF_00607">
    <property type="entry name" value="16SrRNA_methyltr_A"/>
    <property type="match status" value="1"/>
</dbReference>
<dbReference type="InterPro" id="IPR001737">
    <property type="entry name" value="KsgA/Erm"/>
</dbReference>
<dbReference type="InterPro" id="IPR023165">
    <property type="entry name" value="rRNA_Ade_diMease-like_C"/>
</dbReference>
<dbReference type="InterPro" id="IPR020596">
    <property type="entry name" value="rRNA_Ade_Mease_Trfase_CS"/>
</dbReference>
<dbReference type="InterPro" id="IPR020598">
    <property type="entry name" value="rRNA_Ade_methylase_Trfase_N"/>
</dbReference>
<dbReference type="InterPro" id="IPR011530">
    <property type="entry name" value="rRNA_adenine_dimethylase"/>
</dbReference>
<dbReference type="InterPro" id="IPR029063">
    <property type="entry name" value="SAM-dependent_MTases_sf"/>
</dbReference>
<dbReference type="NCBIfam" id="TIGR00755">
    <property type="entry name" value="ksgA"/>
    <property type="match status" value="1"/>
</dbReference>
<dbReference type="PANTHER" id="PTHR11727">
    <property type="entry name" value="DIMETHYLADENOSINE TRANSFERASE"/>
    <property type="match status" value="1"/>
</dbReference>
<dbReference type="PANTHER" id="PTHR11727:SF7">
    <property type="entry name" value="DIMETHYLADENOSINE TRANSFERASE-RELATED"/>
    <property type="match status" value="1"/>
</dbReference>
<dbReference type="Pfam" id="PF00398">
    <property type="entry name" value="RrnaAD"/>
    <property type="match status" value="1"/>
</dbReference>
<dbReference type="SMART" id="SM00650">
    <property type="entry name" value="rADc"/>
    <property type="match status" value="1"/>
</dbReference>
<dbReference type="SUPFAM" id="SSF53335">
    <property type="entry name" value="S-adenosyl-L-methionine-dependent methyltransferases"/>
    <property type="match status" value="1"/>
</dbReference>
<dbReference type="PROSITE" id="PS01131">
    <property type="entry name" value="RRNA_A_DIMETH"/>
    <property type="match status" value="1"/>
</dbReference>
<dbReference type="PROSITE" id="PS51689">
    <property type="entry name" value="SAM_RNA_A_N6_MT"/>
    <property type="match status" value="1"/>
</dbReference>
<keyword id="KW-0002">3D-structure</keyword>
<keyword id="KW-0963">Cytoplasm</keyword>
<keyword id="KW-0489">Methyltransferase</keyword>
<keyword id="KW-1185">Reference proteome</keyword>
<keyword id="KW-0694">RNA-binding</keyword>
<keyword id="KW-0698">rRNA processing</keyword>
<keyword id="KW-0949">S-adenosyl-L-methionine</keyword>
<keyword id="KW-0808">Transferase</keyword>
<proteinExistence type="evidence at protein level"/>
<name>RSMA_METJA</name>
<sequence length="275" mass="31771">MFKPKKKLGQCFLIDKNFVNKAVESANLTKDDVVLEIGLGKGILTEELAKNAKKVYVIEIDKSLEPYANKLKELYNNIEIIWGDALKVDLNKLDFNKVVANLPYQISSPITFKLIKRGFDLAVLMYQYEFAKRMVAKEGTKDYGRLSVAVQSRADVEIVAKVPPSAFYPKPKVYSAIVKIKPNKGKYHIENENFFDDFLRAIFQHRNKSVRKALIDSSKELNYNKDEMKKILEDFLNTNSEIKNLINEKVFKLSVKDIVNLSNEFYRFLQNRGRL</sequence>